<feature type="chain" id="PRO_1000184215" description="Protein translocase subunit SecA">
    <location>
        <begin position="1"/>
        <end position="964"/>
    </location>
</feature>
<feature type="region of interest" description="Disordered" evidence="2">
    <location>
        <begin position="846"/>
        <end position="964"/>
    </location>
</feature>
<feature type="compositionally biased region" description="Acidic residues" evidence="2">
    <location>
        <begin position="871"/>
        <end position="882"/>
    </location>
</feature>
<feature type="compositionally biased region" description="Low complexity" evidence="2">
    <location>
        <begin position="887"/>
        <end position="900"/>
    </location>
</feature>
<feature type="binding site" evidence="1">
    <location>
        <position position="86"/>
    </location>
    <ligand>
        <name>ATP</name>
        <dbReference type="ChEBI" id="CHEBI:30616"/>
    </ligand>
</feature>
<feature type="binding site" evidence="1">
    <location>
        <begin position="104"/>
        <end position="108"/>
    </location>
    <ligand>
        <name>ATP</name>
        <dbReference type="ChEBI" id="CHEBI:30616"/>
    </ligand>
</feature>
<feature type="binding site" evidence="1">
    <location>
        <position position="494"/>
    </location>
    <ligand>
        <name>ATP</name>
        <dbReference type="ChEBI" id="CHEBI:30616"/>
    </ligand>
</feature>
<feature type="binding site" evidence="1">
    <location>
        <position position="947"/>
    </location>
    <ligand>
        <name>Zn(2+)</name>
        <dbReference type="ChEBI" id="CHEBI:29105"/>
    </ligand>
</feature>
<feature type="binding site" evidence="1">
    <location>
        <position position="949"/>
    </location>
    <ligand>
        <name>Zn(2+)</name>
        <dbReference type="ChEBI" id="CHEBI:29105"/>
    </ligand>
</feature>
<feature type="binding site" evidence="1">
    <location>
        <position position="958"/>
    </location>
    <ligand>
        <name>Zn(2+)</name>
        <dbReference type="ChEBI" id="CHEBI:29105"/>
    </ligand>
</feature>
<feature type="binding site" evidence="1">
    <location>
        <position position="959"/>
    </location>
    <ligand>
        <name>Zn(2+)</name>
        <dbReference type="ChEBI" id="CHEBI:29105"/>
    </ligand>
</feature>
<dbReference type="EC" id="7.4.2.8" evidence="1"/>
<dbReference type="EMBL" id="CP001095">
    <property type="protein sequence ID" value="ACJ52051.1"/>
    <property type="molecule type" value="Genomic_DNA"/>
</dbReference>
<dbReference type="EMBL" id="AP010889">
    <property type="protein sequence ID" value="BAJ68559.1"/>
    <property type="molecule type" value="Genomic_DNA"/>
</dbReference>
<dbReference type="RefSeq" id="WP_012577317.1">
    <property type="nucleotide sequence ID" value="NC_011593.1"/>
</dbReference>
<dbReference type="SMR" id="B7GQH1"/>
<dbReference type="KEGG" id="bln:Blon_0952"/>
<dbReference type="KEGG" id="blon:BLIJ_0969"/>
<dbReference type="PATRIC" id="fig|391904.8.peg.979"/>
<dbReference type="HOGENOM" id="CLU_005314_3_0_11"/>
<dbReference type="Proteomes" id="UP000001360">
    <property type="component" value="Chromosome"/>
</dbReference>
<dbReference type="GO" id="GO:0031522">
    <property type="term" value="C:cell envelope Sec protein transport complex"/>
    <property type="evidence" value="ECO:0007669"/>
    <property type="project" value="TreeGrafter"/>
</dbReference>
<dbReference type="GO" id="GO:0005829">
    <property type="term" value="C:cytosol"/>
    <property type="evidence" value="ECO:0007669"/>
    <property type="project" value="TreeGrafter"/>
</dbReference>
<dbReference type="GO" id="GO:0005886">
    <property type="term" value="C:plasma membrane"/>
    <property type="evidence" value="ECO:0007669"/>
    <property type="project" value="UniProtKB-SubCell"/>
</dbReference>
<dbReference type="GO" id="GO:0005524">
    <property type="term" value="F:ATP binding"/>
    <property type="evidence" value="ECO:0007669"/>
    <property type="project" value="UniProtKB-UniRule"/>
</dbReference>
<dbReference type="GO" id="GO:0046872">
    <property type="term" value="F:metal ion binding"/>
    <property type="evidence" value="ECO:0007669"/>
    <property type="project" value="UniProtKB-KW"/>
</dbReference>
<dbReference type="GO" id="GO:0008564">
    <property type="term" value="F:protein-exporting ATPase activity"/>
    <property type="evidence" value="ECO:0007669"/>
    <property type="project" value="UniProtKB-EC"/>
</dbReference>
<dbReference type="GO" id="GO:0065002">
    <property type="term" value="P:intracellular protein transmembrane transport"/>
    <property type="evidence" value="ECO:0007669"/>
    <property type="project" value="UniProtKB-UniRule"/>
</dbReference>
<dbReference type="GO" id="GO:0017038">
    <property type="term" value="P:protein import"/>
    <property type="evidence" value="ECO:0007669"/>
    <property type="project" value="InterPro"/>
</dbReference>
<dbReference type="GO" id="GO:0006605">
    <property type="term" value="P:protein targeting"/>
    <property type="evidence" value="ECO:0007669"/>
    <property type="project" value="UniProtKB-UniRule"/>
</dbReference>
<dbReference type="GO" id="GO:0043952">
    <property type="term" value="P:protein transport by the Sec complex"/>
    <property type="evidence" value="ECO:0007669"/>
    <property type="project" value="TreeGrafter"/>
</dbReference>
<dbReference type="CDD" id="cd17928">
    <property type="entry name" value="DEXDc_SecA"/>
    <property type="match status" value="1"/>
</dbReference>
<dbReference type="CDD" id="cd18803">
    <property type="entry name" value="SF2_C_secA"/>
    <property type="match status" value="1"/>
</dbReference>
<dbReference type="FunFam" id="3.40.50.300:FF:000113">
    <property type="entry name" value="Preprotein translocase subunit SecA"/>
    <property type="match status" value="1"/>
</dbReference>
<dbReference type="FunFam" id="3.40.50.300:FF:000334">
    <property type="entry name" value="Protein translocase subunit SecA"/>
    <property type="match status" value="1"/>
</dbReference>
<dbReference type="FunFam" id="3.90.1440.10:FF:000002">
    <property type="entry name" value="Protein translocase subunit SecA"/>
    <property type="match status" value="1"/>
</dbReference>
<dbReference type="Gene3D" id="3.10.450.50">
    <property type="match status" value="1"/>
</dbReference>
<dbReference type="Gene3D" id="1.10.3060.10">
    <property type="entry name" value="Helical scaffold and wing domains of SecA"/>
    <property type="match status" value="1"/>
</dbReference>
<dbReference type="Gene3D" id="3.40.50.300">
    <property type="entry name" value="P-loop containing nucleotide triphosphate hydrolases"/>
    <property type="match status" value="2"/>
</dbReference>
<dbReference type="Gene3D" id="3.90.1440.10">
    <property type="entry name" value="SecA, preprotein cross-linking domain"/>
    <property type="match status" value="1"/>
</dbReference>
<dbReference type="HAMAP" id="MF_01382">
    <property type="entry name" value="SecA"/>
    <property type="match status" value="1"/>
</dbReference>
<dbReference type="InterPro" id="IPR014001">
    <property type="entry name" value="Helicase_ATP-bd"/>
</dbReference>
<dbReference type="InterPro" id="IPR001650">
    <property type="entry name" value="Helicase_C-like"/>
</dbReference>
<dbReference type="InterPro" id="IPR027417">
    <property type="entry name" value="P-loop_NTPase"/>
</dbReference>
<dbReference type="InterPro" id="IPR004027">
    <property type="entry name" value="SEC_C_motif"/>
</dbReference>
<dbReference type="InterPro" id="IPR000185">
    <property type="entry name" value="SecA"/>
</dbReference>
<dbReference type="InterPro" id="IPR020937">
    <property type="entry name" value="SecA_CS"/>
</dbReference>
<dbReference type="InterPro" id="IPR011115">
    <property type="entry name" value="SecA_DEAD"/>
</dbReference>
<dbReference type="InterPro" id="IPR014018">
    <property type="entry name" value="SecA_motor_DEAD"/>
</dbReference>
<dbReference type="InterPro" id="IPR011130">
    <property type="entry name" value="SecA_preprotein_X-link_dom"/>
</dbReference>
<dbReference type="InterPro" id="IPR044722">
    <property type="entry name" value="SecA_SF2_C"/>
</dbReference>
<dbReference type="InterPro" id="IPR011116">
    <property type="entry name" value="SecA_Wing/Scaffold"/>
</dbReference>
<dbReference type="InterPro" id="IPR036266">
    <property type="entry name" value="SecA_Wing/Scaffold_sf"/>
</dbReference>
<dbReference type="InterPro" id="IPR036670">
    <property type="entry name" value="SecA_X-link_sf"/>
</dbReference>
<dbReference type="NCBIfam" id="NF009538">
    <property type="entry name" value="PRK12904.1"/>
    <property type="match status" value="1"/>
</dbReference>
<dbReference type="NCBIfam" id="TIGR00963">
    <property type="entry name" value="secA"/>
    <property type="match status" value="1"/>
</dbReference>
<dbReference type="PANTHER" id="PTHR30612:SF0">
    <property type="entry name" value="CHLOROPLAST PROTEIN-TRANSPORTING ATPASE"/>
    <property type="match status" value="1"/>
</dbReference>
<dbReference type="PANTHER" id="PTHR30612">
    <property type="entry name" value="SECA INNER MEMBRANE COMPONENT OF SEC PROTEIN SECRETION SYSTEM"/>
    <property type="match status" value="1"/>
</dbReference>
<dbReference type="Pfam" id="PF21090">
    <property type="entry name" value="P-loop_SecA"/>
    <property type="match status" value="1"/>
</dbReference>
<dbReference type="Pfam" id="PF02810">
    <property type="entry name" value="SEC-C"/>
    <property type="match status" value="1"/>
</dbReference>
<dbReference type="Pfam" id="PF07517">
    <property type="entry name" value="SecA_DEAD"/>
    <property type="match status" value="1"/>
</dbReference>
<dbReference type="Pfam" id="PF01043">
    <property type="entry name" value="SecA_PP_bind"/>
    <property type="match status" value="1"/>
</dbReference>
<dbReference type="Pfam" id="PF07516">
    <property type="entry name" value="SecA_SW"/>
    <property type="match status" value="1"/>
</dbReference>
<dbReference type="PRINTS" id="PR00906">
    <property type="entry name" value="SECA"/>
</dbReference>
<dbReference type="SMART" id="SM00957">
    <property type="entry name" value="SecA_DEAD"/>
    <property type="match status" value="1"/>
</dbReference>
<dbReference type="SMART" id="SM00958">
    <property type="entry name" value="SecA_PP_bind"/>
    <property type="match status" value="1"/>
</dbReference>
<dbReference type="SUPFAM" id="SSF81886">
    <property type="entry name" value="Helical scaffold and wing domains of SecA"/>
    <property type="match status" value="1"/>
</dbReference>
<dbReference type="SUPFAM" id="SSF52540">
    <property type="entry name" value="P-loop containing nucleoside triphosphate hydrolases"/>
    <property type="match status" value="2"/>
</dbReference>
<dbReference type="SUPFAM" id="SSF81767">
    <property type="entry name" value="Pre-protein crosslinking domain of SecA"/>
    <property type="match status" value="1"/>
</dbReference>
<dbReference type="PROSITE" id="PS01312">
    <property type="entry name" value="SECA"/>
    <property type="match status" value="1"/>
</dbReference>
<dbReference type="PROSITE" id="PS51196">
    <property type="entry name" value="SECA_MOTOR_DEAD"/>
    <property type="match status" value="1"/>
</dbReference>
<reference key="1">
    <citation type="journal article" date="2008" name="Proc. Natl. Acad. Sci. U.S.A.">
        <title>The genome sequence of Bifidobacterium longum subsp. infantis reveals adaptations for milk utilization within the infant microbiome.</title>
        <authorList>
            <person name="Sela D.A."/>
            <person name="Chapman J."/>
            <person name="Adeuya A."/>
            <person name="Kim J.H."/>
            <person name="Chen F."/>
            <person name="Whitehead T.R."/>
            <person name="Lapidus A."/>
            <person name="Rokhsar D.S."/>
            <person name="Lebrilla C.B."/>
            <person name="German J.B."/>
            <person name="Price N.P."/>
            <person name="Richardson P.M."/>
            <person name="Mills D.A."/>
        </authorList>
    </citation>
    <scope>NUCLEOTIDE SEQUENCE [LARGE SCALE GENOMIC DNA]</scope>
    <source>
        <strain>ATCC 15697 / DSM 20088 / JCM 1222 / NCTC 11817 / S12</strain>
    </source>
</reference>
<reference key="2">
    <citation type="journal article" date="2011" name="Nature">
        <title>Bifidobacteria can protect from enteropathogenic infection through production of acetate.</title>
        <authorList>
            <person name="Fukuda S."/>
            <person name="Toh H."/>
            <person name="Hase K."/>
            <person name="Oshima K."/>
            <person name="Nakanishi Y."/>
            <person name="Yoshimura K."/>
            <person name="Tobe T."/>
            <person name="Clarke J.M."/>
            <person name="Topping D.L."/>
            <person name="Suzuki T."/>
            <person name="Taylor T.D."/>
            <person name="Itoh K."/>
            <person name="Kikuchi J."/>
            <person name="Morita H."/>
            <person name="Hattori M."/>
            <person name="Ohno H."/>
        </authorList>
    </citation>
    <scope>NUCLEOTIDE SEQUENCE [LARGE SCALE GENOMIC DNA]</scope>
    <source>
        <strain>ATCC 15697 / DSM 20088 / JCM 1222 / NCTC 11817 / S12</strain>
    </source>
</reference>
<protein>
    <recommendedName>
        <fullName evidence="1">Protein translocase subunit SecA</fullName>
        <ecNumber evidence="1">7.4.2.8</ecNumber>
    </recommendedName>
</protein>
<proteinExistence type="inferred from homology"/>
<accession>B7GQH1</accession>
<accession>E8MRD4</accession>
<evidence type="ECO:0000255" key="1">
    <source>
        <dbReference type="HAMAP-Rule" id="MF_01382"/>
    </source>
</evidence>
<evidence type="ECO:0000256" key="2">
    <source>
        <dbReference type="SAM" id="MobiDB-lite"/>
    </source>
</evidence>
<gene>
    <name evidence="1" type="primary">secA</name>
    <name type="ordered locus">Blon_0952</name>
    <name type="ordered locus">BLIJ_0969</name>
</gene>
<name>SECA_BIFLS</name>
<sequence>MVDIVDKALRMGEGHQLKKLENVAKAVNALEDEISALSDEDLKAQTPKFKQEIENGKSLDEIMPEAFATVREVSKRTLGQRHFDVQLMGGAALHWGNIAEMKTGEGKTLVATLPTYLNALEGKGVHVVTVNDYLASYQSELMGRIYRFLGMNVGCIITEQKPPERRKQYNADITYGTNNEFGFDYLRDNMAWEKADLVQRGHHYAIVDEVDSILIDEARTPLIISGPAEGDVTRWYRQFAKLVLKLTRDEDYDVDEKKKVVGILDPGITKVEDFLGIDNLYEPANTALIGYLNNAIKAKELFLRDKDYVVTQGEVLIVDEHTGRILPGRRYNEGLHQAIEAKEGVEVKAENQTFATITLQNYFRMYDKLAGMTGTAETEAAEFMNTYKLGVLPIKTNKPMIRKDQDDLIYRTKKEKLAAIVKDVAKRHAEGQPVLLGTASVESSEVVSALLDVAKIPHQVLNAKQHEKEAAVVAVAGRKGAVTVATNMAGRGTDIMLGGNVEFLADAKLKSEGYSPEDTPEEYEKRWPGTLNEIKAQVKDEHEEVKELGGLYVLGTERHESRRIDNQLRGRSGRQGDPGESRFYLSLEDDLMRLFNTQLVAQVMARGMEEGQPIEAKSVTKGVRTAQKAVESRNYEIRKNVLKYDDVMNKQRTVIYSERQAVLKGEDIHKDILRFISDTVESYIKGANKGSEKPKDWDWEGLFKALNTVIPTKVDEDEVRKIVGGLKGAKAVEAVRDLIVEDARQQYGEMEETIGETGLRDLERRVVLAVLDRKWREHLYEMDYLKDGIGLRGMGQRDPLVEYQREGYQMYNSMIEAIKEETVQLLFHIDIKQVATTDDAVDEVEETAESADTIAVASGPDENGESVVEAAEGEVEEEDEDTDAKQAIAESAAASEAGESTLPVAGPAPVSHAEGKVPVSKRPKSEELKTPWADGRTFPGTGKNAPCPCGSGRKYKMCHGQNEA</sequence>
<organism>
    <name type="scientific">Bifidobacterium longum subsp. infantis (strain ATCC 15697 / DSM 20088 / JCM 1222 / NCTC 11817 / S12)</name>
    <dbReference type="NCBI Taxonomy" id="391904"/>
    <lineage>
        <taxon>Bacteria</taxon>
        <taxon>Bacillati</taxon>
        <taxon>Actinomycetota</taxon>
        <taxon>Actinomycetes</taxon>
        <taxon>Bifidobacteriales</taxon>
        <taxon>Bifidobacteriaceae</taxon>
        <taxon>Bifidobacterium</taxon>
    </lineage>
</organism>
<comment type="function">
    <text evidence="1">Part of the Sec protein translocase complex. Interacts with the SecYEG preprotein conducting channel. Has a central role in coupling the hydrolysis of ATP to the transfer of proteins into and across the cell membrane, serving as an ATP-driven molecular motor driving the stepwise translocation of polypeptide chains across the membrane.</text>
</comment>
<comment type="catalytic activity">
    <reaction evidence="1">
        <text>ATP + H2O + cellular proteinSide 1 = ADP + phosphate + cellular proteinSide 2.</text>
        <dbReference type="EC" id="7.4.2.8"/>
    </reaction>
</comment>
<comment type="cofactor">
    <cofactor evidence="1">
        <name>Zn(2+)</name>
        <dbReference type="ChEBI" id="CHEBI:29105"/>
    </cofactor>
    <text evidence="1">May bind 1 zinc ion per subunit.</text>
</comment>
<comment type="subunit">
    <text evidence="1">Monomer and homodimer. Part of the essential Sec protein translocation apparatus which comprises SecA, SecYEG and auxiliary proteins SecDF. Other proteins may also be involved.</text>
</comment>
<comment type="subcellular location">
    <subcellularLocation>
        <location evidence="1">Cell membrane</location>
        <topology evidence="1">Peripheral membrane protein</topology>
        <orientation evidence="1">Cytoplasmic side</orientation>
    </subcellularLocation>
    <subcellularLocation>
        <location evidence="1">Cytoplasm</location>
    </subcellularLocation>
    <text evidence="1">Distribution is 50-50.</text>
</comment>
<comment type="similarity">
    <text evidence="1">Belongs to the SecA family.</text>
</comment>
<keyword id="KW-0067">ATP-binding</keyword>
<keyword id="KW-1003">Cell membrane</keyword>
<keyword id="KW-0963">Cytoplasm</keyword>
<keyword id="KW-0472">Membrane</keyword>
<keyword id="KW-0479">Metal-binding</keyword>
<keyword id="KW-0547">Nucleotide-binding</keyword>
<keyword id="KW-0653">Protein transport</keyword>
<keyword id="KW-1278">Translocase</keyword>
<keyword id="KW-0811">Translocation</keyword>
<keyword id="KW-0813">Transport</keyword>
<keyword id="KW-0862">Zinc</keyword>